<name>RL13_BACLD</name>
<accession>Q65P73</accession>
<accession>Q62ZL2</accession>
<gene>
    <name evidence="1" type="primary">rplM</name>
    <name type="ordered locus">BLi00167</name>
    <name type="ordered locus">BL01019</name>
</gene>
<reference key="1">
    <citation type="journal article" date="2004" name="J. Mol. Microbiol. Biotechnol.">
        <title>The complete genome sequence of Bacillus licheniformis DSM13, an organism with great industrial potential.</title>
        <authorList>
            <person name="Veith B."/>
            <person name="Herzberg C."/>
            <person name="Steckel S."/>
            <person name="Feesche J."/>
            <person name="Maurer K.H."/>
            <person name="Ehrenreich P."/>
            <person name="Baeumer S."/>
            <person name="Henne A."/>
            <person name="Liesegang H."/>
            <person name="Merkl R."/>
            <person name="Ehrenreich A."/>
            <person name="Gottschalk G."/>
        </authorList>
    </citation>
    <scope>NUCLEOTIDE SEQUENCE [LARGE SCALE GENOMIC DNA]</scope>
    <source>
        <strain>ATCC 14580 / DSM 13 / JCM 2505 / CCUG 7422 / NBRC 12200 / NCIMB 9375 / NCTC 10341 / NRRL NRS-1264 / Gibson 46</strain>
    </source>
</reference>
<reference key="2">
    <citation type="journal article" date="2004" name="Genome Biol.">
        <title>Complete genome sequence of the industrial bacterium Bacillus licheniformis and comparisons with closely related Bacillus species.</title>
        <authorList>
            <person name="Rey M.W."/>
            <person name="Ramaiya P."/>
            <person name="Nelson B.A."/>
            <person name="Brody-Karpin S.D."/>
            <person name="Zaretsky E.J."/>
            <person name="Tang M."/>
            <person name="Lopez de Leon A."/>
            <person name="Xiang H."/>
            <person name="Gusti V."/>
            <person name="Clausen I.G."/>
            <person name="Olsen P.B."/>
            <person name="Rasmussen M.D."/>
            <person name="Andersen J.T."/>
            <person name="Joergensen P.L."/>
            <person name="Larsen T.S."/>
            <person name="Sorokin A."/>
            <person name="Bolotin A."/>
            <person name="Lapidus A."/>
            <person name="Galleron N."/>
            <person name="Ehrlich S.D."/>
            <person name="Berka R.M."/>
        </authorList>
    </citation>
    <scope>NUCLEOTIDE SEQUENCE [LARGE SCALE GENOMIC DNA]</scope>
    <source>
        <strain>ATCC 14580 / DSM 13 / JCM 2505 / CCUG 7422 / NBRC 12200 / NCIMB 9375 / NCTC 10341 / NRRL NRS-1264 / Gibson 46</strain>
    </source>
</reference>
<organism>
    <name type="scientific">Bacillus licheniformis (strain ATCC 14580 / DSM 13 / JCM 2505 / CCUG 7422 / NBRC 12200 / NCIMB 9375 / NCTC 10341 / NRRL NRS-1264 / Gibson 46)</name>
    <dbReference type="NCBI Taxonomy" id="279010"/>
    <lineage>
        <taxon>Bacteria</taxon>
        <taxon>Bacillati</taxon>
        <taxon>Bacillota</taxon>
        <taxon>Bacilli</taxon>
        <taxon>Bacillales</taxon>
        <taxon>Bacillaceae</taxon>
        <taxon>Bacillus</taxon>
    </lineage>
</organism>
<keyword id="KW-1185">Reference proteome</keyword>
<keyword id="KW-0687">Ribonucleoprotein</keyword>
<keyword id="KW-0689">Ribosomal protein</keyword>
<evidence type="ECO:0000255" key="1">
    <source>
        <dbReference type="HAMAP-Rule" id="MF_01366"/>
    </source>
</evidence>
<evidence type="ECO:0000305" key="2"/>
<comment type="function">
    <text evidence="1">This protein is one of the early assembly proteins of the 50S ribosomal subunit, although it is not seen to bind rRNA by itself. It is important during the early stages of 50S assembly.</text>
</comment>
<comment type="subunit">
    <text evidence="1">Part of the 50S ribosomal subunit.</text>
</comment>
<comment type="similarity">
    <text evidence="1">Belongs to the universal ribosomal protein uL13 family.</text>
</comment>
<dbReference type="EMBL" id="AE017333">
    <property type="protein sequence ID" value="AAU39141.1"/>
    <property type="molecule type" value="Genomic_DNA"/>
</dbReference>
<dbReference type="EMBL" id="CP000002">
    <property type="protein sequence ID" value="AAU21796.1"/>
    <property type="molecule type" value="Genomic_DNA"/>
</dbReference>
<dbReference type="RefSeq" id="WP_003178393.1">
    <property type="nucleotide sequence ID" value="NC_006322.1"/>
</dbReference>
<dbReference type="SMR" id="Q65P73"/>
<dbReference type="STRING" id="279010.BL01019"/>
<dbReference type="GeneID" id="92858869"/>
<dbReference type="KEGG" id="bld:BLi00167"/>
<dbReference type="KEGG" id="bli:BL01019"/>
<dbReference type="eggNOG" id="COG0102">
    <property type="taxonomic scope" value="Bacteria"/>
</dbReference>
<dbReference type="HOGENOM" id="CLU_082184_2_2_9"/>
<dbReference type="Proteomes" id="UP000000606">
    <property type="component" value="Chromosome"/>
</dbReference>
<dbReference type="GO" id="GO:0022625">
    <property type="term" value="C:cytosolic large ribosomal subunit"/>
    <property type="evidence" value="ECO:0007669"/>
    <property type="project" value="TreeGrafter"/>
</dbReference>
<dbReference type="GO" id="GO:0003729">
    <property type="term" value="F:mRNA binding"/>
    <property type="evidence" value="ECO:0007669"/>
    <property type="project" value="TreeGrafter"/>
</dbReference>
<dbReference type="GO" id="GO:0003735">
    <property type="term" value="F:structural constituent of ribosome"/>
    <property type="evidence" value="ECO:0007669"/>
    <property type="project" value="InterPro"/>
</dbReference>
<dbReference type="GO" id="GO:0017148">
    <property type="term" value="P:negative regulation of translation"/>
    <property type="evidence" value="ECO:0007669"/>
    <property type="project" value="TreeGrafter"/>
</dbReference>
<dbReference type="GO" id="GO:0006412">
    <property type="term" value="P:translation"/>
    <property type="evidence" value="ECO:0007669"/>
    <property type="project" value="UniProtKB-UniRule"/>
</dbReference>
<dbReference type="CDD" id="cd00392">
    <property type="entry name" value="Ribosomal_L13"/>
    <property type="match status" value="1"/>
</dbReference>
<dbReference type="FunFam" id="3.90.1180.10:FF:000001">
    <property type="entry name" value="50S ribosomal protein L13"/>
    <property type="match status" value="1"/>
</dbReference>
<dbReference type="Gene3D" id="3.90.1180.10">
    <property type="entry name" value="Ribosomal protein L13"/>
    <property type="match status" value="1"/>
</dbReference>
<dbReference type="HAMAP" id="MF_01366">
    <property type="entry name" value="Ribosomal_uL13"/>
    <property type="match status" value="1"/>
</dbReference>
<dbReference type="InterPro" id="IPR005822">
    <property type="entry name" value="Ribosomal_uL13"/>
</dbReference>
<dbReference type="InterPro" id="IPR005823">
    <property type="entry name" value="Ribosomal_uL13_bac-type"/>
</dbReference>
<dbReference type="InterPro" id="IPR023563">
    <property type="entry name" value="Ribosomal_uL13_CS"/>
</dbReference>
<dbReference type="InterPro" id="IPR036899">
    <property type="entry name" value="Ribosomal_uL13_sf"/>
</dbReference>
<dbReference type="NCBIfam" id="TIGR01066">
    <property type="entry name" value="rplM_bact"/>
    <property type="match status" value="1"/>
</dbReference>
<dbReference type="PANTHER" id="PTHR11545:SF2">
    <property type="entry name" value="LARGE RIBOSOMAL SUBUNIT PROTEIN UL13M"/>
    <property type="match status" value="1"/>
</dbReference>
<dbReference type="PANTHER" id="PTHR11545">
    <property type="entry name" value="RIBOSOMAL PROTEIN L13"/>
    <property type="match status" value="1"/>
</dbReference>
<dbReference type="Pfam" id="PF00572">
    <property type="entry name" value="Ribosomal_L13"/>
    <property type="match status" value="1"/>
</dbReference>
<dbReference type="PIRSF" id="PIRSF002181">
    <property type="entry name" value="Ribosomal_L13"/>
    <property type="match status" value="1"/>
</dbReference>
<dbReference type="SUPFAM" id="SSF52161">
    <property type="entry name" value="Ribosomal protein L13"/>
    <property type="match status" value="1"/>
</dbReference>
<dbReference type="PROSITE" id="PS00783">
    <property type="entry name" value="RIBOSOMAL_L13"/>
    <property type="match status" value="1"/>
</dbReference>
<sequence length="145" mass="16417">MRTTPMANASNIERKWLVVDAAGKTLGRLSTEVASILRGKHKPTYTPHVDTGDHVIIINAEKIELTGKKLTDKIYYRHTQHPGGLKSRTALEMRTNYPEKMLELAIKGMLPKGSLGRQMFKKLNVYRGSEHPHQAQKPEVYELRG</sequence>
<protein>
    <recommendedName>
        <fullName evidence="1">Large ribosomal subunit protein uL13</fullName>
    </recommendedName>
    <alternativeName>
        <fullName evidence="2">50S ribosomal protein L13</fullName>
    </alternativeName>
</protein>
<proteinExistence type="inferred from homology"/>
<feature type="chain" id="PRO_0000261687" description="Large ribosomal subunit protein uL13">
    <location>
        <begin position="1"/>
        <end position="145"/>
    </location>
</feature>